<accession>Q1GBL7</accession>
<name>RL4_LACDA</name>
<protein>
    <recommendedName>
        <fullName evidence="1">Large ribosomal subunit protein uL4</fullName>
    </recommendedName>
    <alternativeName>
        <fullName evidence="3">50S ribosomal protein L4</fullName>
    </alternativeName>
</protein>
<dbReference type="EMBL" id="CR954253">
    <property type="protein sequence ID" value="CAI97232.1"/>
    <property type="molecule type" value="Genomic_DNA"/>
</dbReference>
<dbReference type="RefSeq" id="WP_011543640.1">
    <property type="nucleotide sequence ID" value="NZ_JQAV01000001.1"/>
</dbReference>
<dbReference type="SMR" id="Q1GBL7"/>
<dbReference type="STRING" id="390333.Ldb0397"/>
<dbReference type="KEGG" id="ldb:Ldb0397"/>
<dbReference type="eggNOG" id="COG0088">
    <property type="taxonomic scope" value="Bacteria"/>
</dbReference>
<dbReference type="HOGENOM" id="CLU_041575_5_2_9"/>
<dbReference type="BioCyc" id="LDEL390333:LDB_RS01680-MONOMER"/>
<dbReference type="Proteomes" id="UP000001259">
    <property type="component" value="Chromosome"/>
</dbReference>
<dbReference type="GO" id="GO:1990904">
    <property type="term" value="C:ribonucleoprotein complex"/>
    <property type="evidence" value="ECO:0007669"/>
    <property type="project" value="UniProtKB-KW"/>
</dbReference>
<dbReference type="GO" id="GO:0005840">
    <property type="term" value="C:ribosome"/>
    <property type="evidence" value="ECO:0007669"/>
    <property type="project" value="UniProtKB-KW"/>
</dbReference>
<dbReference type="GO" id="GO:0019843">
    <property type="term" value="F:rRNA binding"/>
    <property type="evidence" value="ECO:0007669"/>
    <property type="project" value="UniProtKB-UniRule"/>
</dbReference>
<dbReference type="GO" id="GO:0003735">
    <property type="term" value="F:structural constituent of ribosome"/>
    <property type="evidence" value="ECO:0007669"/>
    <property type="project" value="InterPro"/>
</dbReference>
<dbReference type="GO" id="GO:0006412">
    <property type="term" value="P:translation"/>
    <property type="evidence" value="ECO:0007669"/>
    <property type="project" value="UniProtKB-UniRule"/>
</dbReference>
<dbReference type="FunFam" id="3.40.1370.10:FF:000003">
    <property type="entry name" value="50S ribosomal protein L4"/>
    <property type="match status" value="1"/>
</dbReference>
<dbReference type="Gene3D" id="3.40.1370.10">
    <property type="match status" value="1"/>
</dbReference>
<dbReference type="HAMAP" id="MF_01328_B">
    <property type="entry name" value="Ribosomal_uL4_B"/>
    <property type="match status" value="1"/>
</dbReference>
<dbReference type="InterPro" id="IPR002136">
    <property type="entry name" value="Ribosomal_uL4"/>
</dbReference>
<dbReference type="InterPro" id="IPR013005">
    <property type="entry name" value="Ribosomal_uL4-like"/>
</dbReference>
<dbReference type="InterPro" id="IPR023574">
    <property type="entry name" value="Ribosomal_uL4_dom_sf"/>
</dbReference>
<dbReference type="NCBIfam" id="TIGR03953">
    <property type="entry name" value="rplD_bact"/>
    <property type="match status" value="1"/>
</dbReference>
<dbReference type="PANTHER" id="PTHR10746">
    <property type="entry name" value="50S RIBOSOMAL PROTEIN L4"/>
    <property type="match status" value="1"/>
</dbReference>
<dbReference type="PANTHER" id="PTHR10746:SF6">
    <property type="entry name" value="LARGE RIBOSOMAL SUBUNIT PROTEIN UL4M"/>
    <property type="match status" value="1"/>
</dbReference>
<dbReference type="Pfam" id="PF00573">
    <property type="entry name" value="Ribosomal_L4"/>
    <property type="match status" value="1"/>
</dbReference>
<dbReference type="SUPFAM" id="SSF52166">
    <property type="entry name" value="Ribosomal protein L4"/>
    <property type="match status" value="1"/>
</dbReference>
<comment type="function">
    <text evidence="1">One of the primary rRNA binding proteins, this protein initially binds near the 5'-end of the 23S rRNA. It is important during the early stages of 50S assembly. It makes multiple contacts with different domains of the 23S rRNA in the assembled 50S subunit and ribosome.</text>
</comment>
<comment type="function">
    <text evidence="1">Forms part of the polypeptide exit tunnel.</text>
</comment>
<comment type="subunit">
    <text evidence="1">Part of the 50S ribosomal subunit.</text>
</comment>
<comment type="similarity">
    <text evidence="1">Belongs to the universal ribosomal protein uL4 family.</text>
</comment>
<evidence type="ECO:0000255" key="1">
    <source>
        <dbReference type="HAMAP-Rule" id="MF_01328"/>
    </source>
</evidence>
<evidence type="ECO:0000256" key="2">
    <source>
        <dbReference type="SAM" id="MobiDB-lite"/>
    </source>
</evidence>
<evidence type="ECO:0000305" key="3"/>
<reference key="1">
    <citation type="journal article" date="2006" name="Proc. Natl. Acad. Sci. U.S.A.">
        <title>The complete genome sequence of Lactobacillus bulgaricus reveals extensive and ongoing reductive evolution.</title>
        <authorList>
            <person name="van de Guchte M."/>
            <person name="Penaud S."/>
            <person name="Grimaldi C."/>
            <person name="Barbe V."/>
            <person name="Bryson K."/>
            <person name="Nicolas P."/>
            <person name="Robert C."/>
            <person name="Oztas S."/>
            <person name="Mangenot S."/>
            <person name="Couloux A."/>
            <person name="Loux V."/>
            <person name="Dervyn R."/>
            <person name="Bossy R."/>
            <person name="Bolotin A."/>
            <person name="Batto J.-M."/>
            <person name="Walunas T."/>
            <person name="Gibrat J.-F."/>
            <person name="Bessieres P."/>
            <person name="Weissenbach J."/>
            <person name="Ehrlich S.D."/>
            <person name="Maguin E."/>
        </authorList>
    </citation>
    <scope>NUCLEOTIDE SEQUENCE [LARGE SCALE GENOMIC DNA]</scope>
    <source>
        <strain>ATCC 11842 / DSM 20081 / BCRC 10696 / JCM 1002 / NBRC 13953 / NCIMB 11778 / NCTC 12712 / WDCM 00102 / Lb 14</strain>
    </source>
</reference>
<gene>
    <name evidence="1" type="primary">rplD</name>
    <name type="ordered locus">Ldb0397</name>
</gene>
<feature type="chain" id="PRO_1000052422" description="Large ribosomal subunit protein uL4">
    <location>
        <begin position="1"/>
        <end position="205"/>
    </location>
</feature>
<feature type="region of interest" description="Disordered" evidence="2">
    <location>
        <begin position="44"/>
        <end position="77"/>
    </location>
</feature>
<feature type="compositionally biased region" description="Basic residues" evidence="2">
    <location>
        <begin position="51"/>
        <end position="71"/>
    </location>
</feature>
<sequence length="205" mass="22591">MANFKLMDQNGNNAGEVTLNDNVFSVEPNEAVVFDAIIRQRAGKRQGTSKVKNRSAVRGGGKKPWRQKGTGRARQGSIRAPQWRGGGVVFGPTPRSYAYSMPRKQRRLAIKSVLSQKLLDQNLVVLDKLTMDAPKTRDFVAILNGLKLEGKVLVVSDDKNVQLSAKNLPKVKVVPVNGLNVEDAVNYDKLVLTQDDVKKIEEVLA</sequence>
<organism>
    <name type="scientific">Lactobacillus delbrueckii subsp. bulgaricus (strain ATCC 11842 / DSM 20081 / BCRC 10696 / JCM 1002 / NBRC 13953 / NCIMB 11778 / NCTC 12712 / WDCM 00102 / Lb 14)</name>
    <dbReference type="NCBI Taxonomy" id="390333"/>
    <lineage>
        <taxon>Bacteria</taxon>
        <taxon>Bacillati</taxon>
        <taxon>Bacillota</taxon>
        <taxon>Bacilli</taxon>
        <taxon>Lactobacillales</taxon>
        <taxon>Lactobacillaceae</taxon>
        <taxon>Lactobacillus</taxon>
    </lineage>
</organism>
<proteinExistence type="inferred from homology"/>
<keyword id="KW-1185">Reference proteome</keyword>
<keyword id="KW-0687">Ribonucleoprotein</keyword>
<keyword id="KW-0689">Ribosomal protein</keyword>
<keyword id="KW-0694">RNA-binding</keyword>
<keyword id="KW-0699">rRNA-binding</keyword>